<accession>P9WFE4</accession>
<accession>L0T7W1</accession>
<accession>P50050</accession>
<dbReference type="EMBL" id="AE000516">
    <property type="protein sequence ID" value="AAK46170.1"/>
    <property type="molecule type" value="Genomic_DNA"/>
</dbReference>
<dbReference type="PIR" id="C70665">
    <property type="entry name" value="C70665"/>
</dbReference>
<dbReference type="RefSeq" id="WP_003899050.1">
    <property type="nucleotide sequence ID" value="NZ_KK341227.1"/>
</dbReference>
<dbReference type="SMR" id="P9WFE4"/>
<dbReference type="KEGG" id="mtc:MT1899"/>
<dbReference type="PATRIC" id="fig|83331.31.peg.2043"/>
<dbReference type="HOGENOM" id="CLU_049215_3_0_11"/>
<dbReference type="Proteomes" id="UP000001020">
    <property type="component" value="Chromosome"/>
</dbReference>
<dbReference type="GO" id="GO:0005737">
    <property type="term" value="C:cytoplasm"/>
    <property type="evidence" value="ECO:0007669"/>
    <property type="project" value="UniProtKB-SubCell"/>
</dbReference>
<dbReference type="GO" id="GO:0016151">
    <property type="term" value="F:nickel cation binding"/>
    <property type="evidence" value="ECO:0007669"/>
    <property type="project" value="UniProtKB-UniRule"/>
</dbReference>
<dbReference type="Gene3D" id="1.10.4190.10">
    <property type="entry name" value="Urease accessory protein UreF"/>
    <property type="match status" value="1"/>
</dbReference>
<dbReference type="HAMAP" id="MF_01385">
    <property type="entry name" value="UreF"/>
    <property type="match status" value="1"/>
</dbReference>
<dbReference type="InterPro" id="IPR002639">
    <property type="entry name" value="UreF"/>
</dbReference>
<dbReference type="InterPro" id="IPR038277">
    <property type="entry name" value="UreF_sf"/>
</dbReference>
<dbReference type="PANTHER" id="PTHR33620">
    <property type="entry name" value="UREASE ACCESSORY PROTEIN F"/>
    <property type="match status" value="1"/>
</dbReference>
<dbReference type="PANTHER" id="PTHR33620:SF1">
    <property type="entry name" value="UREASE ACCESSORY PROTEIN F"/>
    <property type="match status" value="1"/>
</dbReference>
<dbReference type="Pfam" id="PF01730">
    <property type="entry name" value="UreF"/>
    <property type="match status" value="1"/>
</dbReference>
<dbReference type="PIRSF" id="PIRSF009467">
    <property type="entry name" value="Ureas_acces_UreF"/>
    <property type="match status" value="1"/>
</dbReference>
<gene>
    <name evidence="1" type="primary">ureF</name>
    <name type="ordered locus">MT1899</name>
</gene>
<reference key="1">
    <citation type="journal article" date="2002" name="J. Bacteriol.">
        <title>Whole-genome comparison of Mycobacterium tuberculosis clinical and laboratory strains.</title>
        <authorList>
            <person name="Fleischmann R.D."/>
            <person name="Alland D."/>
            <person name="Eisen J.A."/>
            <person name="Carpenter L."/>
            <person name="White O."/>
            <person name="Peterson J.D."/>
            <person name="DeBoy R.T."/>
            <person name="Dodson R.J."/>
            <person name="Gwinn M.L."/>
            <person name="Haft D.H."/>
            <person name="Hickey E.K."/>
            <person name="Kolonay J.F."/>
            <person name="Nelson W.C."/>
            <person name="Umayam L.A."/>
            <person name="Ermolaeva M.D."/>
            <person name="Salzberg S.L."/>
            <person name="Delcher A."/>
            <person name="Utterback T.R."/>
            <person name="Weidman J.F."/>
            <person name="Khouri H.M."/>
            <person name="Gill J."/>
            <person name="Mikula A."/>
            <person name="Bishai W."/>
            <person name="Jacobs W.R. Jr."/>
            <person name="Venter J.C."/>
            <person name="Fraser C.M."/>
        </authorList>
    </citation>
    <scope>NUCLEOTIDE SEQUENCE [LARGE SCALE GENOMIC DNA]</scope>
    <source>
        <strain>CDC 1551 / Oshkosh</strain>
    </source>
</reference>
<protein>
    <recommendedName>
        <fullName evidence="1">Urease accessory protein UreF</fullName>
    </recommendedName>
</protein>
<name>UREF_MYCTO</name>
<sequence length="211" mass="22356">MTSLAVLLTLADSRLPTGAHVHSGGIEEAIAAGMVTGLATLEAFLKRRVRTHGLLTASIAAAVHRGELAVDDADRETDARTPAPAARHASRSQGRGLIRLARRVWPDSGWEELGPRPHLAVVAGRVGALSGLAPEHNALHLVYITMTGSAIAAQRLLALDPAEVTVVTFQLSELCEQIAQEATAGLADLSDPLLDTLAQRHDERVRPLFVS</sequence>
<evidence type="ECO:0000255" key="1">
    <source>
        <dbReference type="HAMAP-Rule" id="MF_01385"/>
    </source>
</evidence>
<evidence type="ECO:0000256" key="2">
    <source>
        <dbReference type="SAM" id="MobiDB-lite"/>
    </source>
</evidence>
<keyword id="KW-0143">Chaperone</keyword>
<keyword id="KW-0963">Cytoplasm</keyword>
<keyword id="KW-0996">Nickel insertion</keyword>
<keyword id="KW-1185">Reference proteome</keyword>
<feature type="chain" id="PRO_0000428553" description="Urease accessory protein UreF">
    <location>
        <begin position="1"/>
        <end position="211"/>
    </location>
</feature>
<feature type="region of interest" description="Disordered" evidence="2">
    <location>
        <begin position="71"/>
        <end position="93"/>
    </location>
</feature>
<proteinExistence type="inferred from homology"/>
<comment type="function">
    <text evidence="1">Required for maturation of urease via the functional incorporation of the urease nickel metallocenter.</text>
</comment>
<comment type="subunit">
    <text evidence="1">UreD, UreF and UreG form a complex that acts as a GTP-hydrolysis-dependent molecular chaperone, activating the urease apoprotein by helping to assemble the nickel containing metallocenter of UreC. The UreE protein probably delivers the nickel.</text>
</comment>
<comment type="subcellular location">
    <subcellularLocation>
        <location evidence="1">Cytoplasm</location>
    </subcellularLocation>
</comment>
<comment type="similarity">
    <text evidence="1">Belongs to the UreF family.</text>
</comment>
<organism>
    <name type="scientific">Mycobacterium tuberculosis (strain CDC 1551 / Oshkosh)</name>
    <dbReference type="NCBI Taxonomy" id="83331"/>
    <lineage>
        <taxon>Bacteria</taxon>
        <taxon>Bacillati</taxon>
        <taxon>Actinomycetota</taxon>
        <taxon>Actinomycetes</taxon>
        <taxon>Mycobacteriales</taxon>
        <taxon>Mycobacteriaceae</taxon>
        <taxon>Mycobacterium</taxon>
        <taxon>Mycobacterium tuberculosis complex</taxon>
    </lineage>
</organism>